<reference key="1">
    <citation type="journal article" date="2010" name="Environ. Microbiol.">
        <title>The genome of Syntrophomonas wolfei: new insights into syntrophic metabolism and biohydrogen production.</title>
        <authorList>
            <person name="Sieber J.R."/>
            <person name="Sims D.R."/>
            <person name="Han C."/>
            <person name="Kim E."/>
            <person name="Lykidis A."/>
            <person name="Lapidus A.L."/>
            <person name="McDonnald E."/>
            <person name="Rohlin L."/>
            <person name="Culley D.E."/>
            <person name="Gunsalus R."/>
            <person name="McInerney M.J."/>
        </authorList>
    </citation>
    <scope>NUCLEOTIDE SEQUENCE [LARGE SCALE GENOMIC DNA]</scope>
    <source>
        <strain>DSM 2245B / Goettingen</strain>
    </source>
</reference>
<feature type="chain" id="PRO_1000025391" description="Co-chaperonin GroES">
    <location>
        <begin position="1"/>
        <end position="96"/>
    </location>
</feature>
<gene>
    <name evidence="1" type="primary">groES</name>
    <name evidence="1" type="synonym">groS</name>
    <name type="ordered locus">Swol_1856</name>
</gene>
<evidence type="ECO:0000255" key="1">
    <source>
        <dbReference type="HAMAP-Rule" id="MF_00580"/>
    </source>
</evidence>
<organism>
    <name type="scientific">Syntrophomonas wolfei subsp. wolfei (strain DSM 2245B / Goettingen)</name>
    <dbReference type="NCBI Taxonomy" id="335541"/>
    <lineage>
        <taxon>Bacteria</taxon>
        <taxon>Bacillati</taxon>
        <taxon>Bacillota</taxon>
        <taxon>Clostridia</taxon>
        <taxon>Eubacteriales</taxon>
        <taxon>Syntrophomonadaceae</taxon>
        <taxon>Syntrophomonas</taxon>
    </lineage>
</organism>
<name>CH10_SYNWW</name>
<protein>
    <recommendedName>
        <fullName evidence="1">Co-chaperonin GroES</fullName>
    </recommendedName>
    <alternativeName>
        <fullName evidence="1">10 kDa chaperonin</fullName>
    </alternativeName>
    <alternativeName>
        <fullName evidence="1">Chaperonin-10</fullName>
        <shortName evidence="1">Cpn10</shortName>
    </alternativeName>
</protein>
<accession>Q0AVV0</accession>
<keyword id="KW-0143">Chaperone</keyword>
<keyword id="KW-0963">Cytoplasm</keyword>
<keyword id="KW-1185">Reference proteome</keyword>
<proteinExistence type="inferred from homology"/>
<comment type="function">
    <text evidence="1">Together with the chaperonin GroEL, plays an essential role in assisting protein folding. The GroEL-GroES system forms a nano-cage that allows encapsulation of the non-native substrate proteins and provides a physical environment optimized to promote and accelerate protein folding. GroES binds to the apical surface of the GroEL ring, thereby capping the opening of the GroEL channel.</text>
</comment>
<comment type="subunit">
    <text evidence="1">Heptamer of 7 subunits arranged in a ring. Interacts with the chaperonin GroEL.</text>
</comment>
<comment type="subcellular location">
    <subcellularLocation>
        <location evidence="1">Cytoplasm</location>
    </subcellularLocation>
</comment>
<comment type="similarity">
    <text evidence="1">Belongs to the GroES chaperonin family.</text>
</comment>
<sequence length="96" mass="10437">MKIQPLGDRLVVKVAEVAAEKTKSGLYVPDTAKEKPQEGEVLAVGPGAFNDKGERMPMDVAVGDKIIFSKYGGTEIKIDGEEYLVMSQRDILAKIN</sequence>
<dbReference type="EMBL" id="CP000448">
    <property type="protein sequence ID" value="ABI69154.1"/>
    <property type="molecule type" value="Genomic_DNA"/>
</dbReference>
<dbReference type="RefSeq" id="WP_011641249.1">
    <property type="nucleotide sequence ID" value="NC_008346.1"/>
</dbReference>
<dbReference type="SMR" id="Q0AVV0"/>
<dbReference type="STRING" id="335541.Swol_1856"/>
<dbReference type="KEGG" id="swo:Swol_1856"/>
<dbReference type="eggNOG" id="COG0234">
    <property type="taxonomic scope" value="Bacteria"/>
</dbReference>
<dbReference type="HOGENOM" id="CLU_132825_2_0_9"/>
<dbReference type="Proteomes" id="UP000001968">
    <property type="component" value="Chromosome"/>
</dbReference>
<dbReference type="GO" id="GO:0005737">
    <property type="term" value="C:cytoplasm"/>
    <property type="evidence" value="ECO:0007669"/>
    <property type="project" value="UniProtKB-SubCell"/>
</dbReference>
<dbReference type="GO" id="GO:0005524">
    <property type="term" value="F:ATP binding"/>
    <property type="evidence" value="ECO:0007669"/>
    <property type="project" value="InterPro"/>
</dbReference>
<dbReference type="GO" id="GO:0046872">
    <property type="term" value="F:metal ion binding"/>
    <property type="evidence" value="ECO:0007669"/>
    <property type="project" value="TreeGrafter"/>
</dbReference>
<dbReference type="GO" id="GO:0044183">
    <property type="term" value="F:protein folding chaperone"/>
    <property type="evidence" value="ECO:0007669"/>
    <property type="project" value="InterPro"/>
</dbReference>
<dbReference type="GO" id="GO:0051087">
    <property type="term" value="F:protein-folding chaperone binding"/>
    <property type="evidence" value="ECO:0007669"/>
    <property type="project" value="TreeGrafter"/>
</dbReference>
<dbReference type="GO" id="GO:0051082">
    <property type="term" value="F:unfolded protein binding"/>
    <property type="evidence" value="ECO:0007669"/>
    <property type="project" value="TreeGrafter"/>
</dbReference>
<dbReference type="GO" id="GO:0051085">
    <property type="term" value="P:chaperone cofactor-dependent protein refolding"/>
    <property type="evidence" value="ECO:0007669"/>
    <property type="project" value="TreeGrafter"/>
</dbReference>
<dbReference type="CDD" id="cd00320">
    <property type="entry name" value="cpn10"/>
    <property type="match status" value="1"/>
</dbReference>
<dbReference type="FunFam" id="2.30.33.40:FF:000001">
    <property type="entry name" value="10 kDa chaperonin"/>
    <property type="match status" value="1"/>
</dbReference>
<dbReference type="Gene3D" id="2.30.33.40">
    <property type="entry name" value="GroES chaperonin"/>
    <property type="match status" value="1"/>
</dbReference>
<dbReference type="HAMAP" id="MF_00580">
    <property type="entry name" value="CH10"/>
    <property type="match status" value="1"/>
</dbReference>
<dbReference type="InterPro" id="IPR020818">
    <property type="entry name" value="Chaperonin_GroES"/>
</dbReference>
<dbReference type="InterPro" id="IPR037124">
    <property type="entry name" value="Chaperonin_GroES_sf"/>
</dbReference>
<dbReference type="InterPro" id="IPR011032">
    <property type="entry name" value="GroES-like_sf"/>
</dbReference>
<dbReference type="NCBIfam" id="NF001530">
    <property type="entry name" value="PRK00364.1-6"/>
    <property type="match status" value="1"/>
</dbReference>
<dbReference type="NCBIfam" id="NF001531">
    <property type="entry name" value="PRK00364.2-2"/>
    <property type="match status" value="1"/>
</dbReference>
<dbReference type="NCBIfam" id="NF001533">
    <property type="entry name" value="PRK00364.2-4"/>
    <property type="match status" value="1"/>
</dbReference>
<dbReference type="NCBIfam" id="NF001534">
    <property type="entry name" value="PRK00364.2-5"/>
    <property type="match status" value="1"/>
</dbReference>
<dbReference type="PANTHER" id="PTHR10772">
    <property type="entry name" value="10 KDA HEAT SHOCK PROTEIN"/>
    <property type="match status" value="1"/>
</dbReference>
<dbReference type="PANTHER" id="PTHR10772:SF58">
    <property type="entry name" value="CO-CHAPERONIN GROES"/>
    <property type="match status" value="1"/>
</dbReference>
<dbReference type="Pfam" id="PF00166">
    <property type="entry name" value="Cpn10"/>
    <property type="match status" value="1"/>
</dbReference>
<dbReference type="PRINTS" id="PR00297">
    <property type="entry name" value="CHAPERONIN10"/>
</dbReference>
<dbReference type="SMART" id="SM00883">
    <property type="entry name" value="Cpn10"/>
    <property type="match status" value="1"/>
</dbReference>
<dbReference type="SUPFAM" id="SSF50129">
    <property type="entry name" value="GroES-like"/>
    <property type="match status" value="1"/>
</dbReference>